<gene>
    <name type="primary">tufA</name>
</gene>
<sequence length="410" mass="44810">MAREKFERTKPHVNIGTIGHVDHGKTTLTAAITMVMACNTAGSKGKKYEDIDSAPEEKARGITINTAHVEYETATRHYAHVDCPGHADYVKNMITGAAQMDGAILVVSGADGPMPQTKEHILLAKQVGVPNIVVFLNKQDQVDDEELLELVELEVRETLSNYEFPGDEVPVVPGSALLALEAMTENPSLKRGENEWVDKIFALMDAVDQYIPTPKRDTDKSFLMAVEDVFSITGRGTVATGRVERGSVKLGDTIEIVGLKPTRETTVTGLEMFQKTLDQSVAGDNVGILLRGIQKEDIQRGMVLAAPRTITPHTKFESQVYVLTKEEGGRHTPFFPGYRPQFYVRTTDVTGKIDSFRADDGGEATMVMPGDRVKMVVELIQPIAIEKGMRFAIREGGRTVGAGVVSNIIA</sequence>
<reference key="1">
    <citation type="journal article" date="1999" name="Proc. Natl. Acad. Sci. U.S.A.">
        <title>The complete chloroplast DNA sequence of the green alga Nephroselmis olivacea: insights into the architecture of ancestral chloroplast genomes.</title>
        <authorList>
            <person name="Turmel M."/>
            <person name="Otis C."/>
            <person name="Lemieux C."/>
        </authorList>
    </citation>
    <scope>NUCLEOTIDE SEQUENCE [LARGE SCALE GENOMIC DNA]</scope>
    <source>
        <strain>NIES-484 / S-N-5-8</strain>
    </source>
</reference>
<protein>
    <recommendedName>
        <fullName>Elongation factor Tu, chloroplastic</fullName>
        <shortName>EF-Tu</shortName>
        <ecNumber evidence="2">3.6.5.3</ecNumber>
    </recommendedName>
</protein>
<organism>
    <name type="scientific">Nephroselmis olivacea</name>
    <name type="common">Green alga</name>
    <dbReference type="NCBI Taxonomy" id="31312"/>
    <lineage>
        <taxon>Eukaryota</taxon>
        <taxon>Viridiplantae</taxon>
        <taxon>Chlorophyta</taxon>
        <taxon>Nephroselmidophyceae</taxon>
        <taxon>Nephroselmidales</taxon>
        <taxon>Nephroselmidaceae</taxon>
        <taxon>Nephroselmis</taxon>
    </lineage>
</organism>
<proteinExistence type="inferred from homology"/>
<name>EFTU_NEPOL</name>
<accession>Q9TKZ5</accession>
<dbReference type="EC" id="3.6.5.3" evidence="2"/>
<dbReference type="EMBL" id="AF137379">
    <property type="protein sequence ID" value="AAD54821.1"/>
    <property type="molecule type" value="Genomic_DNA"/>
</dbReference>
<dbReference type="RefSeq" id="NP_050850.1">
    <property type="nucleotide sequence ID" value="NC_000927.1"/>
</dbReference>
<dbReference type="SMR" id="Q9TKZ5"/>
<dbReference type="GeneID" id="802019"/>
<dbReference type="GO" id="GO:0009507">
    <property type="term" value="C:chloroplast"/>
    <property type="evidence" value="ECO:0007669"/>
    <property type="project" value="UniProtKB-SubCell"/>
</dbReference>
<dbReference type="GO" id="GO:0005739">
    <property type="term" value="C:mitochondrion"/>
    <property type="evidence" value="ECO:0007669"/>
    <property type="project" value="TreeGrafter"/>
</dbReference>
<dbReference type="GO" id="GO:0005525">
    <property type="term" value="F:GTP binding"/>
    <property type="evidence" value="ECO:0007669"/>
    <property type="project" value="UniProtKB-UniRule"/>
</dbReference>
<dbReference type="GO" id="GO:0003924">
    <property type="term" value="F:GTPase activity"/>
    <property type="evidence" value="ECO:0007669"/>
    <property type="project" value="InterPro"/>
</dbReference>
<dbReference type="GO" id="GO:0003746">
    <property type="term" value="F:translation elongation factor activity"/>
    <property type="evidence" value="ECO:0007669"/>
    <property type="project" value="UniProtKB-UniRule"/>
</dbReference>
<dbReference type="GO" id="GO:0070125">
    <property type="term" value="P:mitochondrial translational elongation"/>
    <property type="evidence" value="ECO:0007669"/>
    <property type="project" value="TreeGrafter"/>
</dbReference>
<dbReference type="CDD" id="cd01884">
    <property type="entry name" value="EF_Tu"/>
    <property type="match status" value="1"/>
</dbReference>
<dbReference type="CDD" id="cd03697">
    <property type="entry name" value="EFTU_II"/>
    <property type="match status" value="1"/>
</dbReference>
<dbReference type="CDD" id="cd03707">
    <property type="entry name" value="EFTU_III"/>
    <property type="match status" value="1"/>
</dbReference>
<dbReference type="FunFam" id="2.40.30.10:FF:000001">
    <property type="entry name" value="Elongation factor Tu"/>
    <property type="match status" value="1"/>
</dbReference>
<dbReference type="FunFam" id="2.40.30.10:FF:000046">
    <property type="entry name" value="Elongation factor Tu"/>
    <property type="match status" value="1"/>
</dbReference>
<dbReference type="FunFam" id="3.40.50.300:FF:000003">
    <property type="entry name" value="Elongation factor Tu"/>
    <property type="match status" value="1"/>
</dbReference>
<dbReference type="Gene3D" id="3.40.50.300">
    <property type="entry name" value="P-loop containing nucleotide triphosphate hydrolases"/>
    <property type="match status" value="1"/>
</dbReference>
<dbReference type="Gene3D" id="2.40.30.10">
    <property type="entry name" value="Translation factors"/>
    <property type="match status" value="2"/>
</dbReference>
<dbReference type="HAMAP" id="MF_00118_B">
    <property type="entry name" value="EF_Tu_B"/>
    <property type="match status" value="1"/>
</dbReference>
<dbReference type="InterPro" id="IPR041709">
    <property type="entry name" value="EF-Tu_GTP-bd"/>
</dbReference>
<dbReference type="InterPro" id="IPR050055">
    <property type="entry name" value="EF-Tu_GTPase"/>
</dbReference>
<dbReference type="InterPro" id="IPR004161">
    <property type="entry name" value="EFTu-like_2"/>
</dbReference>
<dbReference type="InterPro" id="IPR033720">
    <property type="entry name" value="EFTU_2"/>
</dbReference>
<dbReference type="InterPro" id="IPR031157">
    <property type="entry name" value="G_TR_CS"/>
</dbReference>
<dbReference type="InterPro" id="IPR027417">
    <property type="entry name" value="P-loop_NTPase"/>
</dbReference>
<dbReference type="InterPro" id="IPR005225">
    <property type="entry name" value="Small_GTP-bd"/>
</dbReference>
<dbReference type="InterPro" id="IPR000795">
    <property type="entry name" value="T_Tr_GTP-bd_dom"/>
</dbReference>
<dbReference type="InterPro" id="IPR009000">
    <property type="entry name" value="Transl_B-barrel_sf"/>
</dbReference>
<dbReference type="InterPro" id="IPR009001">
    <property type="entry name" value="Transl_elong_EF1A/Init_IF2_C"/>
</dbReference>
<dbReference type="InterPro" id="IPR004541">
    <property type="entry name" value="Transl_elong_EFTu/EF1A_bac/org"/>
</dbReference>
<dbReference type="InterPro" id="IPR004160">
    <property type="entry name" value="Transl_elong_EFTu/EF1A_C"/>
</dbReference>
<dbReference type="NCBIfam" id="TIGR00485">
    <property type="entry name" value="EF-Tu"/>
    <property type="match status" value="1"/>
</dbReference>
<dbReference type="NCBIfam" id="NF000766">
    <property type="entry name" value="PRK00049.1"/>
    <property type="match status" value="1"/>
</dbReference>
<dbReference type="NCBIfam" id="NF009372">
    <property type="entry name" value="PRK12735.1"/>
    <property type="match status" value="1"/>
</dbReference>
<dbReference type="NCBIfam" id="NF009373">
    <property type="entry name" value="PRK12736.1"/>
    <property type="match status" value="1"/>
</dbReference>
<dbReference type="NCBIfam" id="TIGR00231">
    <property type="entry name" value="small_GTP"/>
    <property type="match status" value="1"/>
</dbReference>
<dbReference type="PANTHER" id="PTHR43721:SF5">
    <property type="entry name" value="ELONGATION FACTOR TU, CHLOROPLASTIC"/>
    <property type="match status" value="1"/>
</dbReference>
<dbReference type="PANTHER" id="PTHR43721">
    <property type="entry name" value="ELONGATION FACTOR TU-RELATED"/>
    <property type="match status" value="1"/>
</dbReference>
<dbReference type="Pfam" id="PF00009">
    <property type="entry name" value="GTP_EFTU"/>
    <property type="match status" value="1"/>
</dbReference>
<dbReference type="Pfam" id="PF03144">
    <property type="entry name" value="GTP_EFTU_D2"/>
    <property type="match status" value="1"/>
</dbReference>
<dbReference type="Pfam" id="PF03143">
    <property type="entry name" value="GTP_EFTU_D3"/>
    <property type="match status" value="1"/>
</dbReference>
<dbReference type="PRINTS" id="PR00315">
    <property type="entry name" value="ELONGATNFCT"/>
</dbReference>
<dbReference type="SUPFAM" id="SSF50465">
    <property type="entry name" value="EF-Tu/eEF-1alpha/eIF2-gamma C-terminal domain"/>
    <property type="match status" value="1"/>
</dbReference>
<dbReference type="SUPFAM" id="SSF52540">
    <property type="entry name" value="P-loop containing nucleoside triphosphate hydrolases"/>
    <property type="match status" value="1"/>
</dbReference>
<dbReference type="SUPFAM" id="SSF50447">
    <property type="entry name" value="Translation proteins"/>
    <property type="match status" value="1"/>
</dbReference>
<dbReference type="PROSITE" id="PS00301">
    <property type="entry name" value="G_TR_1"/>
    <property type="match status" value="1"/>
</dbReference>
<dbReference type="PROSITE" id="PS51722">
    <property type="entry name" value="G_TR_2"/>
    <property type="match status" value="1"/>
</dbReference>
<comment type="function">
    <text evidence="2">GTP hydrolase that promotes the GTP-dependent binding of aminoacyl-tRNA to the A-site of ribosomes during protein biosynthesis.</text>
</comment>
<comment type="catalytic activity">
    <reaction evidence="2">
        <text>GTP + H2O = GDP + phosphate + H(+)</text>
        <dbReference type="Rhea" id="RHEA:19669"/>
        <dbReference type="ChEBI" id="CHEBI:15377"/>
        <dbReference type="ChEBI" id="CHEBI:15378"/>
        <dbReference type="ChEBI" id="CHEBI:37565"/>
        <dbReference type="ChEBI" id="CHEBI:43474"/>
        <dbReference type="ChEBI" id="CHEBI:58189"/>
        <dbReference type="EC" id="3.6.5.3"/>
    </reaction>
    <physiologicalReaction direction="left-to-right" evidence="2">
        <dbReference type="Rhea" id="RHEA:19670"/>
    </physiologicalReaction>
</comment>
<comment type="subcellular location">
    <subcellularLocation>
        <location>Plastid</location>
        <location>Chloroplast</location>
    </subcellularLocation>
</comment>
<comment type="similarity">
    <text evidence="3">Belongs to the TRAFAC class translation factor GTPase superfamily. Classic translation factor GTPase family. EF-Tu/EF-1A subfamily.</text>
</comment>
<feature type="chain" id="PRO_0000091466" description="Elongation factor Tu, chloroplastic">
    <location>
        <begin position="1"/>
        <end position="410"/>
    </location>
</feature>
<feature type="domain" description="tr-type G">
    <location>
        <begin position="10"/>
        <end position="215"/>
    </location>
</feature>
<feature type="region of interest" description="G1" evidence="1">
    <location>
        <begin position="19"/>
        <end position="26"/>
    </location>
</feature>
<feature type="region of interest" description="G2" evidence="1">
    <location>
        <begin position="61"/>
        <end position="65"/>
    </location>
</feature>
<feature type="region of interest" description="G3" evidence="1">
    <location>
        <begin position="82"/>
        <end position="85"/>
    </location>
</feature>
<feature type="region of interest" description="G4" evidence="1">
    <location>
        <begin position="137"/>
        <end position="140"/>
    </location>
</feature>
<feature type="region of interest" description="G5" evidence="1">
    <location>
        <begin position="175"/>
        <end position="177"/>
    </location>
</feature>
<feature type="binding site" evidence="1">
    <location>
        <begin position="19"/>
        <end position="26"/>
    </location>
    <ligand>
        <name>GTP</name>
        <dbReference type="ChEBI" id="CHEBI:37565"/>
    </ligand>
</feature>
<feature type="binding site" evidence="2">
    <location>
        <position position="26"/>
    </location>
    <ligand>
        <name>Mg(2+)</name>
        <dbReference type="ChEBI" id="CHEBI:18420"/>
    </ligand>
</feature>
<feature type="binding site" evidence="1">
    <location>
        <begin position="82"/>
        <end position="86"/>
    </location>
    <ligand>
        <name>GTP</name>
        <dbReference type="ChEBI" id="CHEBI:37565"/>
    </ligand>
</feature>
<feature type="binding site" evidence="1">
    <location>
        <begin position="137"/>
        <end position="140"/>
    </location>
    <ligand>
        <name>GTP</name>
        <dbReference type="ChEBI" id="CHEBI:37565"/>
    </ligand>
</feature>
<geneLocation type="chloroplast"/>
<evidence type="ECO:0000250" key="1"/>
<evidence type="ECO:0000255" key="2">
    <source>
        <dbReference type="HAMAP-Rule" id="MF_00118"/>
    </source>
</evidence>
<evidence type="ECO:0000305" key="3"/>
<keyword id="KW-0150">Chloroplast</keyword>
<keyword id="KW-0251">Elongation factor</keyword>
<keyword id="KW-0342">GTP-binding</keyword>
<keyword id="KW-0378">Hydrolase</keyword>
<keyword id="KW-0460">Magnesium</keyword>
<keyword id="KW-0479">Metal-binding</keyword>
<keyword id="KW-0547">Nucleotide-binding</keyword>
<keyword id="KW-0934">Plastid</keyword>
<keyword id="KW-0648">Protein biosynthesis</keyword>